<organism>
    <name type="scientific">Saimiriine herpesvirus 2 (strain 11)</name>
    <name type="common">SaHV-2</name>
    <name type="synonym">Herpesvirus saimiri</name>
    <dbReference type="NCBI Taxonomy" id="10383"/>
    <lineage>
        <taxon>Viruses</taxon>
        <taxon>Duplodnaviria</taxon>
        <taxon>Heunggongvirae</taxon>
        <taxon>Peploviricota</taxon>
        <taxon>Herviviricetes</taxon>
        <taxon>Herpesvirales</taxon>
        <taxon>Orthoherpesviridae</taxon>
        <taxon>Gammaherpesvirinae</taxon>
        <taxon>Rhadinovirus</taxon>
        <taxon>Rhadinovirus saimiriinegamma2</taxon>
        <taxon>Saimiriine herpesvirus 2</taxon>
    </lineage>
</organism>
<dbReference type="EMBL" id="X64346">
    <property type="protein sequence ID" value="CAA45691.1"/>
    <property type="molecule type" value="Genomic_DNA"/>
</dbReference>
<dbReference type="EMBL" id="M86409">
    <property type="protein sequence ID" value="AAA46144.1"/>
    <property type="molecule type" value="Genomic_DNA"/>
</dbReference>
<dbReference type="RefSeq" id="NP_040270.1">
    <property type="nucleotide sequence ID" value="NC_001350.1"/>
</dbReference>
<dbReference type="SMR" id="Q01040"/>
<dbReference type="KEGG" id="vg:1682464"/>
<dbReference type="Proteomes" id="UP000000587">
    <property type="component" value="Segment"/>
</dbReference>
<dbReference type="GO" id="GO:0030430">
    <property type="term" value="C:host cell cytoplasm"/>
    <property type="evidence" value="ECO:0007669"/>
    <property type="project" value="UniProtKB-SubCell"/>
</dbReference>
<dbReference type="GO" id="GO:0042025">
    <property type="term" value="C:host cell nucleus"/>
    <property type="evidence" value="ECO:0007669"/>
    <property type="project" value="UniProtKB-SubCell"/>
</dbReference>
<dbReference type="GO" id="GO:0019031">
    <property type="term" value="C:viral envelope"/>
    <property type="evidence" value="ECO:0007669"/>
    <property type="project" value="InterPro"/>
</dbReference>
<dbReference type="GO" id="GO:0008270">
    <property type="term" value="F:zinc ion binding"/>
    <property type="evidence" value="ECO:0007669"/>
    <property type="project" value="UniProtKB-KW"/>
</dbReference>
<dbReference type="InterPro" id="IPR002597">
    <property type="entry name" value="Herpes_env"/>
</dbReference>
<dbReference type="Pfam" id="PF01673">
    <property type="entry name" value="Herpes_env"/>
    <property type="match status" value="2"/>
</dbReference>
<dbReference type="PROSITE" id="PS51988">
    <property type="entry name" value="HERPESVIRUS_UL32"/>
    <property type="match status" value="1"/>
</dbReference>
<protein>
    <recommendedName>
        <fullName>Packaging protein UL32</fullName>
    </recommendedName>
</protein>
<keyword id="KW-1035">Host cytoplasm</keyword>
<keyword id="KW-1048">Host nucleus</keyword>
<keyword id="KW-0479">Metal-binding</keyword>
<keyword id="KW-1185">Reference proteome</keyword>
<keyword id="KW-0862">Zinc</keyword>
<keyword id="KW-0863">Zinc-finger</keyword>
<name>UL32_SHV21</name>
<organismHost>
    <name type="scientific">Saimiri sciureus</name>
    <name type="common">Common squirrel monkey</name>
    <dbReference type="NCBI Taxonomy" id="9521"/>
</organismHost>
<reference key="1">
    <citation type="journal article" date="1992" name="J. Virol.">
        <title>Primary structure of the herpesvirus saimiri genome.</title>
        <authorList>
            <person name="Albrecht J.-C."/>
            <person name="Nicholas J."/>
            <person name="Biller D."/>
            <person name="Cameron K.R."/>
            <person name="Biesinger B."/>
            <person name="Newman C."/>
            <person name="Wittmann S."/>
            <person name="Craxton M.A."/>
            <person name="Coleman H."/>
            <person name="Fleckenstein B."/>
            <person name="Honess R.W."/>
        </authorList>
    </citation>
    <scope>NUCLEOTIDE SEQUENCE [LARGE SCALE GENOMIC DNA]</scope>
</reference>
<reference key="2">
    <citation type="journal article" date="1992" name="Virology">
        <title>Analysis of nucleotide sequence of the rightmost 43 kbp of herpesvirus saimiri (HVS) L-DNA: general conservation of genetic organization between HVS and Epstein-Barr virus.</title>
        <authorList>
            <person name="Nicholas J."/>
            <person name="Cameron K.R."/>
            <person name="Coleman H."/>
            <person name="Newman C."/>
            <person name="Honess R.W."/>
        </authorList>
    </citation>
    <scope>NUCLEOTIDE SEQUENCE [GENOMIC DNA]</scope>
</reference>
<proteinExistence type="inferred from homology"/>
<gene>
    <name type="primary">68</name>
    <name type="synonym">ECRF1</name>
</gene>
<evidence type="ECO:0000250" key="1"/>
<evidence type="ECO:0000255" key="2">
    <source>
        <dbReference type="PROSITE-ProRule" id="PRU01332"/>
    </source>
</evidence>
<evidence type="ECO:0000305" key="3"/>
<accession>Q01040</accession>
<feature type="chain" id="PRO_0000116020" description="Packaging protein UL32">
    <location>
        <begin position="1"/>
        <end position="436"/>
    </location>
</feature>
<feature type="region of interest" description="Zinc finger 1" evidence="2">
    <location>
        <begin position="52"/>
        <end position="135"/>
    </location>
</feature>
<feature type="region of interest" description="Zinc finger 3" evidence="2">
    <location>
        <begin position="182"/>
        <end position="421"/>
    </location>
</feature>
<feature type="region of interest" description="Zinc finger 2" evidence="2">
    <location>
        <begin position="266"/>
        <end position="342"/>
    </location>
</feature>
<feature type="binding site" evidence="2">
    <location>
        <position position="52"/>
    </location>
    <ligand>
        <name>Zn(2+)</name>
        <dbReference type="ChEBI" id="CHEBI:29105"/>
        <label>1</label>
    </ligand>
</feature>
<feature type="binding site" evidence="2">
    <location>
        <position position="55"/>
    </location>
    <ligand>
        <name>Zn(2+)</name>
        <dbReference type="ChEBI" id="CHEBI:29105"/>
        <label>1</label>
    </ligand>
</feature>
<feature type="binding site" evidence="2">
    <location>
        <position position="129"/>
    </location>
    <ligand>
        <name>Zn(2+)</name>
        <dbReference type="ChEBI" id="CHEBI:29105"/>
        <label>1</label>
    </ligand>
</feature>
<feature type="binding site" evidence="2">
    <location>
        <position position="135"/>
    </location>
    <ligand>
        <name>Zn(2+)</name>
        <dbReference type="ChEBI" id="CHEBI:29105"/>
        <label>1</label>
    </ligand>
</feature>
<feature type="binding site" evidence="2">
    <location>
        <position position="182"/>
    </location>
    <ligand>
        <name>Zn(2+)</name>
        <dbReference type="ChEBI" id="CHEBI:29105"/>
        <label>3</label>
    </ligand>
</feature>
<feature type="binding site" evidence="2">
    <location>
        <position position="183"/>
    </location>
    <ligand>
        <name>Zn(2+)</name>
        <dbReference type="ChEBI" id="CHEBI:29105"/>
        <label>3</label>
    </ligand>
</feature>
<feature type="binding site" evidence="2">
    <location>
        <position position="266"/>
    </location>
    <ligand>
        <name>Zn(2+)</name>
        <dbReference type="ChEBI" id="CHEBI:29105"/>
        <label>2</label>
    </ligand>
</feature>
<feature type="binding site" evidence="2">
    <location>
        <position position="269"/>
    </location>
    <ligand>
        <name>Zn(2+)</name>
        <dbReference type="ChEBI" id="CHEBI:29105"/>
        <label>2</label>
    </ligand>
</feature>
<feature type="binding site" evidence="2">
    <location>
        <position position="335"/>
    </location>
    <ligand>
        <name>Zn(2+)</name>
        <dbReference type="ChEBI" id="CHEBI:29105"/>
        <label>2</label>
    </ligand>
</feature>
<feature type="binding site" evidence="2">
    <location>
        <position position="342"/>
    </location>
    <ligand>
        <name>Zn(2+)</name>
        <dbReference type="ChEBI" id="CHEBI:29105"/>
        <label>2</label>
    </ligand>
</feature>
<feature type="binding site" evidence="2">
    <location>
        <position position="384"/>
    </location>
    <ligand>
        <name>Zn(2+)</name>
        <dbReference type="ChEBI" id="CHEBI:29105"/>
        <label>3</label>
    </ligand>
</feature>
<feature type="binding site" evidence="2">
    <location>
        <position position="421"/>
    </location>
    <ligand>
        <name>Zn(2+)</name>
        <dbReference type="ChEBI" id="CHEBI:29105"/>
        <label>3</label>
    </ligand>
</feature>
<sequence length="436" mass="49132">MIIPWQKSTLYKHKTSIECLLNYSFMPGTPETALDNLALVHTYAALTSTSTCKICQTLYSLISKNTPAVSFYEDYSLLCLTCLYAPITWTSTLMTAADFIEIIKTHFPTSDTSNFYAPQSLLAIDIQLHFYIHRCFKVLSSNDILSTSSLQFLKTTFLQGKLTGSIPGQFCFKTAWIKNDTCCNNTSHDLPSNLSSVFCKADLQLKPNLLPIILDIWSASDLFKNNVSNSEQPFFTYPEDIDICQGPCLLSPSLGLTQKNNTTSICPLCECIASHPNAIDTLQTLKYTIINCIENNVKLLDRISFILSNDELDFIQDPILKTVIQNCSIQEIHKHFFCDPQCALNIKKTSTNILFKIPDPNLLKVLCARLATGEHLSKNYYLDCEYLETLALIFKCSQTCKVGKTTFLEIIRELDLLSKKHNIPTVKAFQTSQIYA</sequence>
<comment type="function">
    <text evidence="1">Plays a role in efficient localization of neo-synthesized capsids to nuclear replication compartments, thereby controlling cleavage and packaging of virus genomic DNA.</text>
</comment>
<comment type="subcellular location">
    <subcellularLocation>
        <location>Host cytoplasm</location>
    </subcellularLocation>
    <subcellularLocation>
        <location>Host nucleus</location>
    </subcellularLocation>
    <text evidence="1">Mainly cytoplasmic in transfected cell culture.</text>
</comment>
<comment type="similarity">
    <text evidence="3">Belongs to the herpesviridae UL32 protein family.</text>
</comment>
<comment type="caution">
    <text evidence="3">Was originally thought to be an envelope glycoprotein.</text>
</comment>